<sequence length="521" mass="56027">MAKITRALISVSDKTGIVEFSRELAGYGVEILSTGGTAKLLREAGLKVKDVSEFTGFPEMLDGRVKTLHPKVHGGLLGMRGNPEHVATMKAHGIEPIDMVVVNLYPFEATVAKPDCTLEDAIENIDIGGPTMLRSAAKNNADVTVVVDHNDYRLVLDEMKAAGGGVSKETNFRLAVKVYQHTAAYDGAISNWLGARTGEGVAAYPDTLTLQFKKAQGMRYGENPHQSAAFYVERDVKEASVATARQLQGKELSYNNIGDTDAALECVKQFAEGPGCVIVKHANPCGVAIGDTLLDAYDRAYKTDPESAFGGIIAFNGELDEATAKAIVERQFVEVIIAPKVSAKASEVVAAKKNVRLLECGTWQKEPMPRLDFKRVNGGLLVQYTDLALHGELKVVTKRAPTEKEMIDLLFTWRVAKFVKSNAIVYGKDGMTIGVGAGQMSRVNSARIAAIKAEHAGLPVAGSVMASDAFFPFRDGLDNAAAVGITAVIQPGGSMRDEEVIAAADEHGMAMVFTSMRHFRH</sequence>
<reference key="1">
    <citation type="submission" date="2007-05" db="EMBL/GenBank/DDBJ databases">
        <title>Complete sequence of Geobacter uraniireducens Rf4.</title>
        <authorList>
            <consortium name="US DOE Joint Genome Institute"/>
            <person name="Copeland A."/>
            <person name="Lucas S."/>
            <person name="Lapidus A."/>
            <person name="Barry K."/>
            <person name="Detter J.C."/>
            <person name="Glavina del Rio T."/>
            <person name="Hammon N."/>
            <person name="Israni S."/>
            <person name="Dalin E."/>
            <person name="Tice H."/>
            <person name="Pitluck S."/>
            <person name="Chertkov O."/>
            <person name="Brettin T."/>
            <person name="Bruce D."/>
            <person name="Han C."/>
            <person name="Schmutz J."/>
            <person name="Larimer F."/>
            <person name="Land M."/>
            <person name="Hauser L."/>
            <person name="Kyrpides N."/>
            <person name="Mikhailova N."/>
            <person name="Shelobolina E."/>
            <person name="Aklujkar M."/>
            <person name="Lovley D."/>
            <person name="Richardson P."/>
        </authorList>
    </citation>
    <scope>NUCLEOTIDE SEQUENCE [LARGE SCALE GENOMIC DNA]</scope>
    <source>
        <strain>ATCC BAA-1134 / JCM 13001 / Rf4</strain>
    </source>
</reference>
<proteinExistence type="inferred from homology"/>
<name>PUR9_GEOUR</name>
<protein>
    <recommendedName>
        <fullName evidence="1">Bifunctional purine biosynthesis protein PurH</fullName>
    </recommendedName>
    <domain>
        <recommendedName>
            <fullName evidence="1">Phosphoribosylaminoimidazolecarboxamide formyltransferase</fullName>
            <ecNumber evidence="1">2.1.2.3</ecNumber>
        </recommendedName>
        <alternativeName>
            <fullName evidence="1">AICAR transformylase</fullName>
        </alternativeName>
    </domain>
    <domain>
        <recommendedName>
            <fullName evidence="1">IMP cyclohydrolase</fullName>
            <ecNumber evidence="1">3.5.4.10</ecNumber>
        </recommendedName>
        <alternativeName>
            <fullName evidence="1">ATIC</fullName>
        </alternativeName>
        <alternativeName>
            <fullName evidence="1">IMP synthase</fullName>
        </alternativeName>
        <alternativeName>
            <fullName evidence="1">Inosinicase</fullName>
        </alternativeName>
    </domain>
</protein>
<comment type="catalytic activity">
    <reaction evidence="1">
        <text>(6R)-10-formyltetrahydrofolate + 5-amino-1-(5-phospho-beta-D-ribosyl)imidazole-4-carboxamide = 5-formamido-1-(5-phospho-D-ribosyl)imidazole-4-carboxamide + (6S)-5,6,7,8-tetrahydrofolate</text>
        <dbReference type="Rhea" id="RHEA:22192"/>
        <dbReference type="ChEBI" id="CHEBI:57453"/>
        <dbReference type="ChEBI" id="CHEBI:58467"/>
        <dbReference type="ChEBI" id="CHEBI:58475"/>
        <dbReference type="ChEBI" id="CHEBI:195366"/>
        <dbReference type="EC" id="2.1.2.3"/>
    </reaction>
</comment>
<comment type="catalytic activity">
    <reaction evidence="1">
        <text>IMP + H2O = 5-formamido-1-(5-phospho-D-ribosyl)imidazole-4-carboxamide</text>
        <dbReference type="Rhea" id="RHEA:18445"/>
        <dbReference type="ChEBI" id="CHEBI:15377"/>
        <dbReference type="ChEBI" id="CHEBI:58053"/>
        <dbReference type="ChEBI" id="CHEBI:58467"/>
        <dbReference type="EC" id="3.5.4.10"/>
    </reaction>
</comment>
<comment type="pathway">
    <text evidence="1">Purine metabolism; IMP biosynthesis via de novo pathway; 5-formamido-1-(5-phospho-D-ribosyl)imidazole-4-carboxamide from 5-amino-1-(5-phospho-D-ribosyl)imidazole-4-carboxamide (10-formyl THF route): step 1/1.</text>
</comment>
<comment type="pathway">
    <text evidence="1">Purine metabolism; IMP biosynthesis via de novo pathway; IMP from 5-formamido-1-(5-phospho-D-ribosyl)imidazole-4-carboxamide: step 1/1.</text>
</comment>
<comment type="domain">
    <text evidence="1">The IMP cyclohydrolase activity resides in the N-terminal region.</text>
</comment>
<comment type="similarity">
    <text evidence="1">Belongs to the PurH family.</text>
</comment>
<evidence type="ECO:0000255" key="1">
    <source>
        <dbReference type="HAMAP-Rule" id="MF_00139"/>
    </source>
</evidence>
<evidence type="ECO:0000255" key="2">
    <source>
        <dbReference type="PROSITE-ProRule" id="PRU01202"/>
    </source>
</evidence>
<keyword id="KW-0378">Hydrolase</keyword>
<keyword id="KW-0511">Multifunctional enzyme</keyword>
<keyword id="KW-0658">Purine biosynthesis</keyword>
<keyword id="KW-1185">Reference proteome</keyword>
<keyword id="KW-0808">Transferase</keyword>
<gene>
    <name evidence="1" type="primary">purH</name>
    <name type="ordered locus">Gura_3847</name>
</gene>
<dbReference type="EC" id="2.1.2.3" evidence="1"/>
<dbReference type="EC" id="3.5.4.10" evidence="1"/>
<dbReference type="EMBL" id="CP000698">
    <property type="protein sequence ID" value="ABQ27997.1"/>
    <property type="molecule type" value="Genomic_DNA"/>
</dbReference>
<dbReference type="RefSeq" id="WP_011940643.1">
    <property type="nucleotide sequence ID" value="NC_009483.1"/>
</dbReference>
<dbReference type="SMR" id="A5G879"/>
<dbReference type="STRING" id="351605.Gura_3847"/>
<dbReference type="KEGG" id="gur:Gura_3847"/>
<dbReference type="HOGENOM" id="CLU_016316_5_2_7"/>
<dbReference type="OrthoDB" id="9802065at2"/>
<dbReference type="UniPathway" id="UPA00074">
    <property type="reaction ID" value="UER00133"/>
</dbReference>
<dbReference type="UniPathway" id="UPA00074">
    <property type="reaction ID" value="UER00135"/>
</dbReference>
<dbReference type="Proteomes" id="UP000006695">
    <property type="component" value="Chromosome"/>
</dbReference>
<dbReference type="GO" id="GO:0005829">
    <property type="term" value="C:cytosol"/>
    <property type="evidence" value="ECO:0007669"/>
    <property type="project" value="TreeGrafter"/>
</dbReference>
<dbReference type="GO" id="GO:0003937">
    <property type="term" value="F:IMP cyclohydrolase activity"/>
    <property type="evidence" value="ECO:0007669"/>
    <property type="project" value="UniProtKB-UniRule"/>
</dbReference>
<dbReference type="GO" id="GO:0004643">
    <property type="term" value="F:phosphoribosylaminoimidazolecarboxamide formyltransferase activity"/>
    <property type="evidence" value="ECO:0007669"/>
    <property type="project" value="UniProtKB-UniRule"/>
</dbReference>
<dbReference type="GO" id="GO:0006189">
    <property type="term" value="P:'de novo' IMP biosynthetic process"/>
    <property type="evidence" value="ECO:0007669"/>
    <property type="project" value="UniProtKB-UniRule"/>
</dbReference>
<dbReference type="CDD" id="cd01421">
    <property type="entry name" value="IMPCH"/>
    <property type="match status" value="1"/>
</dbReference>
<dbReference type="FunFam" id="3.40.140.20:FF:000001">
    <property type="entry name" value="Bifunctional purine biosynthesis protein PurH"/>
    <property type="match status" value="1"/>
</dbReference>
<dbReference type="FunFam" id="3.40.140.20:FF:000002">
    <property type="entry name" value="Bifunctional purine biosynthesis protein PurH"/>
    <property type="match status" value="1"/>
</dbReference>
<dbReference type="FunFam" id="3.40.50.1380:FF:000001">
    <property type="entry name" value="Bifunctional purine biosynthesis protein PurH"/>
    <property type="match status" value="1"/>
</dbReference>
<dbReference type="Gene3D" id="3.40.140.20">
    <property type="match status" value="2"/>
</dbReference>
<dbReference type="Gene3D" id="3.40.50.1380">
    <property type="entry name" value="Methylglyoxal synthase-like domain"/>
    <property type="match status" value="1"/>
</dbReference>
<dbReference type="HAMAP" id="MF_00139">
    <property type="entry name" value="PurH"/>
    <property type="match status" value="1"/>
</dbReference>
<dbReference type="InterPro" id="IPR024051">
    <property type="entry name" value="AICAR_Tfase_dup_dom_sf"/>
</dbReference>
<dbReference type="InterPro" id="IPR016193">
    <property type="entry name" value="Cytidine_deaminase-like"/>
</dbReference>
<dbReference type="InterPro" id="IPR011607">
    <property type="entry name" value="MGS-like_dom"/>
</dbReference>
<dbReference type="InterPro" id="IPR036914">
    <property type="entry name" value="MGS-like_dom_sf"/>
</dbReference>
<dbReference type="InterPro" id="IPR002695">
    <property type="entry name" value="PurH-like"/>
</dbReference>
<dbReference type="NCBIfam" id="NF002049">
    <property type="entry name" value="PRK00881.1"/>
    <property type="match status" value="1"/>
</dbReference>
<dbReference type="NCBIfam" id="TIGR00355">
    <property type="entry name" value="purH"/>
    <property type="match status" value="1"/>
</dbReference>
<dbReference type="PANTHER" id="PTHR11692:SF0">
    <property type="entry name" value="BIFUNCTIONAL PURINE BIOSYNTHESIS PROTEIN ATIC"/>
    <property type="match status" value="1"/>
</dbReference>
<dbReference type="PANTHER" id="PTHR11692">
    <property type="entry name" value="BIFUNCTIONAL PURINE BIOSYNTHESIS PROTEIN PURH"/>
    <property type="match status" value="1"/>
</dbReference>
<dbReference type="Pfam" id="PF01808">
    <property type="entry name" value="AICARFT_IMPCHas"/>
    <property type="match status" value="1"/>
</dbReference>
<dbReference type="Pfam" id="PF02142">
    <property type="entry name" value="MGS"/>
    <property type="match status" value="1"/>
</dbReference>
<dbReference type="PIRSF" id="PIRSF000414">
    <property type="entry name" value="AICARFT_IMPCHas"/>
    <property type="match status" value="1"/>
</dbReference>
<dbReference type="SMART" id="SM00798">
    <property type="entry name" value="AICARFT_IMPCHas"/>
    <property type="match status" value="1"/>
</dbReference>
<dbReference type="SMART" id="SM00851">
    <property type="entry name" value="MGS"/>
    <property type="match status" value="1"/>
</dbReference>
<dbReference type="SUPFAM" id="SSF53927">
    <property type="entry name" value="Cytidine deaminase-like"/>
    <property type="match status" value="1"/>
</dbReference>
<dbReference type="SUPFAM" id="SSF52335">
    <property type="entry name" value="Methylglyoxal synthase-like"/>
    <property type="match status" value="1"/>
</dbReference>
<dbReference type="PROSITE" id="PS51855">
    <property type="entry name" value="MGS"/>
    <property type="match status" value="1"/>
</dbReference>
<feature type="chain" id="PRO_1000076482" description="Bifunctional purine biosynthesis protein PurH">
    <location>
        <begin position="1"/>
        <end position="521"/>
    </location>
</feature>
<feature type="domain" description="MGS-like" evidence="2">
    <location>
        <begin position="1"/>
        <end position="147"/>
    </location>
</feature>
<accession>A5G879</accession>
<organism>
    <name type="scientific">Geotalea uraniireducens (strain Rf4)</name>
    <name type="common">Geobacter uraniireducens</name>
    <dbReference type="NCBI Taxonomy" id="351605"/>
    <lineage>
        <taxon>Bacteria</taxon>
        <taxon>Pseudomonadati</taxon>
        <taxon>Thermodesulfobacteriota</taxon>
        <taxon>Desulfuromonadia</taxon>
        <taxon>Geobacterales</taxon>
        <taxon>Geobacteraceae</taxon>
        <taxon>Geotalea</taxon>
    </lineage>
</organism>